<protein>
    <recommendedName>
        <fullName evidence="1">Polyribonucleotide nucleotidyltransferase</fullName>
        <ecNumber evidence="1">2.7.7.8</ecNumber>
    </recommendedName>
    <alternativeName>
        <fullName evidence="1">Polynucleotide phosphorylase</fullName>
        <shortName evidence="1">PNPase</shortName>
    </alternativeName>
</protein>
<gene>
    <name evidence="1" type="primary">pnp</name>
    <name type="ordered locus">BMASAVP1_A1125</name>
</gene>
<dbReference type="EC" id="2.7.7.8" evidence="1"/>
<dbReference type="EMBL" id="CP000526">
    <property type="protein sequence ID" value="ABM52380.1"/>
    <property type="molecule type" value="Genomic_DNA"/>
</dbReference>
<dbReference type="RefSeq" id="WP_004186494.1">
    <property type="nucleotide sequence ID" value="NC_008785.1"/>
</dbReference>
<dbReference type="SMR" id="A1V2L2"/>
<dbReference type="GeneID" id="92979547"/>
<dbReference type="KEGG" id="bmv:BMASAVP1_A1125"/>
<dbReference type="HOGENOM" id="CLU_004217_2_2_4"/>
<dbReference type="GO" id="GO:0005829">
    <property type="term" value="C:cytosol"/>
    <property type="evidence" value="ECO:0007669"/>
    <property type="project" value="TreeGrafter"/>
</dbReference>
<dbReference type="GO" id="GO:0000175">
    <property type="term" value="F:3'-5'-RNA exonuclease activity"/>
    <property type="evidence" value="ECO:0007669"/>
    <property type="project" value="TreeGrafter"/>
</dbReference>
<dbReference type="GO" id="GO:0000287">
    <property type="term" value="F:magnesium ion binding"/>
    <property type="evidence" value="ECO:0007669"/>
    <property type="project" value="UniProtKB-UniRule"/>
</dbReference>
<dbReference type="GO" id="GO:0004654">
    <property type="term" value="F:polyribonucleotide nucleotidyltransferase activity"/>
    <property type="evidence" value="ECO:0007669"/>
    <property type="project" value="UniProtKB-UniRule"/>
</dbReference>
<dbReference type="GO" id="GO:0003723">
    <property type="term" value="F:RNA binding"/>
    <property type="evidence" value="ECO:0007669"/>
    <property type="project" value="UniProtKB-UniRule"/>
</dbReference>
<dbReference type="GO" id="GO:0006402">
    <property type="term" value="P:mRNA catabolic process"/>
    <property type="evidence" value="ECO:0007669"/>
    <property type="project" value="UniProtKB-UniRule"/>
</dbReference>
<dbReference type="GO" id="GO:0006396">
    <property type="term" value="P:RNA processing"/>
    <property type="evidence" value="ECO:0007669"/>
    <property type="project" value="InterPro"/>
</dbReference>
<dbReference type="CDD" id="cd02393">
    <property type="entry name" value="KH-I_PNPase"/>
    <property type="match status" value="1"/>
</dbReference>
<dbReference type="CDD" id="cd11363">
    <property type="entry name" value="RNase_PH_PNPase_1"/>
    <property type="match status" value="1"/>
</dbReference>
<dbReference type="CDD" id="cd11364">
    <property type="entry name" value="RNase_PH_PNPase_2"/>
    <property type="match status" value="1"/>
</dbReference>
<dbReference type="CDD" id="cd04472">
    <property type="entry name" value="S1_PNPase"/>
    <property type="match status" value="1"/>
</dbReference>
<dbReference type="FunFam" id="3.30.1370.10:FF:000001">
    <property type="entry name" value="Polyribonucleotide nucleotidyltransferase"/>
    <property type="match status" value="1"/>
</dbReference>
<dbReference type="FunFam" id="3.30.230.70:FF:000001">
    <property type="entry name" value="Polyribonucleotide nucleotidyltransferase"/>
    <property type="match status" value="1"/>
</dbReference>
<dbReference type="FunFam" id="3.30.230.70:FF:000002">
    <property type="entry name" value="Polyribonucleotide nucleotidyltransferase"/>
    <property type="match status" value="1"/>
</dbReference>
<dbReference type="FunFam" id="2.40.50.140:FF:000189">
    <property type="entry name" value="Polyribonucleotide nucleotidyltransferase, putative"/>
    <property type="match status" value="1"/>
</dbReference>
<dbReference type="Gene3D" id="3.30.230.70">
    <property type="entry name" value="GHMP Kinase, N-terminal domain"/>
    <property type="match status" value="2"/>
</dbReference>
<dbReference type="Gene3D" id="3.30.1370.10">
    <property type="entry name" value="K Homology domain, type 1"/>
    <property type="match status" value="1"/>
</dbReference>
<dbReference type="Gene3D" id="2.40.50.140">
    <property type="entry name" value="Nucleic acid-binding proteins"/>
    <property type="match status" value="1"/>
</dbReference>
<dbReference type="HAMAP" id="MF_01595">
    <property type="entry name" value="PNPase"/>
    <property type="match status" value="1"/>
</dbReference>
<dbReference type="InterPro" id="IPR001247">
    <property type="entry name" value="ExoRNase_PH_dom1"/>
</dbReference>
<dbReference type="InterPro" id="IPR015847">
    <property type="entry name" value="ExoRNase_PH_dom2"/>
</dbReference>
<dbReference type="InterPro" id="IPR036345">
    <property type="entry name" value="ExoRNase_PH_dom2_sf"/>
</dbReference>
<dbReference type="InterPro" id="IPR004087">
    <property type="entry name" value="KH_dom"/>
</dbReference>
<dbReference type="InterPro" id="IPR004088">
    <property type="entry name" value="KH_dom_type_1"/>
</dbReference>
<dbReference type="InterPro" id="IPR036612">
    <property type="entry name" value="KH_dom_type_1_sf"/>
</dbReference>
<dbReference type="InterPro" id="IPR012340">
    <property type="entry name" value="NA-bd_OB-fold"/>
</dbReference>
<dbReference type="InterPro" id="IPR012162">
    <property type="entry name" value="PNPase"/>
</dbReference>
<dbReference type="InterPro" id="IPR027408">
    <property type="entry name" value="PNPase/RNase_PH_dom_sf"/>
</dbReference>
<dbReference type="InterPro" id="IPR015848">
    <property type="entry name" value="PNPase_PH_RNA-bd_bac/org-type"/>
</dbReference>
<dbReference type="InterPro" id="IPR036456">
    <property type="entry name" value="PNPase_PH_RNA-bd_sf"/>
</dbReference>
<dbReference type="InterPro" id="IPR020568">
    <property type="entry name" value="Ribosomal_Su5_D2-typ_SF"/>
</dbReference>
<dbReference type="InterPro" id="IPR003029">
    <property type="entry name" value="S1_domain"/>
</dbReference>
<dbReference type="NCBIfam" id="TIGR03591">
    <property type="entry name" value="polynuc_phos"/>
    <property type="match status" value="1"/>
</dbReference>
<dbReference type="NCBIfam" id="NF008805">
    <property type="entry name" value="PRK11824.1"/>
    <property type="match status" value="1"/>
</dbReference>
<dbReference type="PANTHER" id="PTHR11252">
    <property type="entry name" value="POLYRIBONUCLEOTIDE NUCLEOTIDYLTRANSFERASE"/>
    <property type="match status" value="1"/>
</dbReference>
<dbReference type="PANTHER" id="PTHR11252:SF0">
    <property type="entry name" value="POLYRIBONUCLEOTIDE NUCLEOTIDYLTRANSFERASE 1, MITOCHONDRIAL"/>
    <property type="match status" value="1"/>
</dbReference>
<dbReference type="Pfam" id="PF00013">
    <property type="entry name" value="KH_1"/>
    <property type="match status" value="1"/>
</dbReference>
<dbReference type="Pfam" id="PF03726">
    <property type="entry name" value="PNPase"/>
    <property type="match status" value="1"/>
</dbReference>
<dbReference type="Pfam" id="PF01138">
    <property type="entry name" value="RNase_PH"/>
    <property type="match status" value="2"/>
</dbReference>
<dbReference type="Pfam" id="PF03725">
    <property type="entry name" value="RNase_PH_C"/>
    <property type="match status" value="2"/>
</dbReference>
<dbReference type="Pfam" id="PF00575">
    <property type="entry name" value="S1"/>
    <property type="match status" value="1"/>
</dbReference>
<dbReference type="PIRSF" id="PIRSF005499">
    <property type="entry name" value="PNPase"/>
    <property type="match status" value="1"/>
</dbReference>
<dbReference type="SMART" id="SM00322">
    <property type="entry name" value="KH"/>
    <property type="match status" value="1"/>
</dbReference>
<dbReference type="SMART" id="SM00316">
    <property type="entry name" value="S1"/>
    <property type="match status" value="1"/>
</dbReference>
<dbReference type="SUPFAM" id="SSF54791">
    <property type="entry name" value="Eukaryotic type KH-domain (KH-domain type I)"/>
    <property type="match status" value="1"/>
</dbReference>
<dbReference type="SUPFAM" id="SSF50249">
    <property type="entry name" value="Nucleic acid-binding proteins"/>
    <property type="match status" value="1"/>
</dbReference>
<dbReference type="SUPFAM" id="SSF46915">
    <property type="entry name" value="Polynucleotide phosphorylase/guanosine pentaphosphate synthase (PNPase/GPSI), domain 3"/>
    <property type="match status" value="1"/>
</dbReference>
<dbReference type="SUPFAM" id="SSF55666">
    <property type="entry name" value="Ribonuclease PH domain 2-like"/>
    <property type="match status" value="2"/>
</dbReference>
<dbReference type="SUPFAM" id="SSF54211">
    <property type="entry name" value="Ribosomal protein S5 domain 2-like"/>
    <property type="match status" value="2"/>
</dbReference>
<dbReference type="PROSITE" id="PS50084">
    <property type="entry name" value="KH_TYPE_1"/>
    <property type="match status" value="1"/>
</dbReference>
<dbReference type="PROSITE" id="PS50126">
    <property type="entry name" value="S1"/>
    <property type="match status" value="1"/>
</dbReference>
<sequence>MSLFNKIVKEFQWGQQKVRLETGEIARQASGAVIVDIEDTVVLATVVGAKSAKPGQDFFPLTVDYIEKTYSAGKIPGGFFRREGRPSEHETLTSRLIDRPLRPLFPEGFYNEVQVVIHVLSVNPEIPADIPALIGASAALAVSGLPFNGPVGAARVAYVNNEYVLNPTREQIKASRLDLVVAGTERAVLMVESEADQLPEDVMLGAVVFGHEQMQTAIDAIHELVREGGKPEWDWQPAPKDEALNARVTELAQPELLAAYQIRDKQARLTKLKEVYAATSAKLEEEAVAAGTVAADKATVGNILFDLEAKIVRGQILNGEPRIDGRDTRTVRPIEIRTGVLPRTHGSALFTRGETQALVVATLGTKGDEQIIDALEGEYRERFMLHYNMPPFATGETGRVGSPKRREIGHGRLAKRALVACLPSADEFGYSIRVVSEITESNGSSSMASVCGGCLALMDAGVPMKAHVAGIAMGLILEGNKFAVLTDILGDEDHLGDMDFKVAGTADGVTALQMDIKIQGITKEIMQVALAQAKEGRMHILGKMKDAVAGANTQLSEFAPRMITIKINPEKIRDVIGKGGSVIRALTEETGTTIDISDDGVVTIASTNSEGMAEAKKRIENITAEIEVGHVYEGTVLKLLDFGAIVNLLPGKDGLLHISEIVNERVKDINDYLKEGQQVKVKVIQTDEKGRVRLSAKALLNEAAAQADTPPQQ</sequence>
<reference key="1">
    <citation type="journal article" date="2010" name="Genome Biol. Evol.">
        <title>Continuing evolution of Burkholderia mallei through genome reduction and large-scale rearrangements.</title>
        <authorList>
            <person name="Losada L."/>
            <person name="Ronning C.M."/>
            <person name="DeShazer D."/>
            <person name="Woods D."/>
            <person name="Fedorova N."/>
            <person name="Kim H.S."/>
            <person name="Shabalina S.A."/>
            <person name="Pearson T.R."/>
            <person name="Brinkac L."/>
            <person name="Tan P."/>
            <person name="Nandi T."/>
            <person name="Crabtree J."/>
            <person name="Badger J."/>
            <person name="Beckstrom-Sternberg S."/>
            <person name="Saqib M."/>
            <person name="Schutzer S.E."/>
            <person name="Keim P."/>
            <person name="Nierman W.C."/>
        </authorList>
    </citation>
    <scope>NUCLEOTIDE SEQUENCE [LARGE SCALE GENOMIC DNA]</scope>
    <source>
        <strain>SAVP1</strain>
    </source>
</reference>
<evidence type="ECO:0000255" key="1">
    <source>
        <dbReference type="HAMAP-Rule" id="MF_01595"/>
    </source>
</evidence>
<keyword id="KW-0963">Cytoplasm</keyword>
<keyword id="KW-0460">Magnesium</keyword>
<keyword id="KW-0479">Metal-binding</keyword>
<keyword id="KW-0548">Nucleotidyltransferase</keyword>
<keyword id="KW-0694">RNA-binding</keyword>
<keyword id="KW-0808">Transferase</keyword>
<feature type="chain" id="PRO_0000329557" description="Polyribonucleotide nucleotidyltransferase">
    <location>
        <begin position="1"/>
        <end position="713"/>
    </location>
</feature>
<feature type="domain" description="KH" evidence="1">
    <location>
        <begin position="560"/>
        <end position="619"/>
    </location>
</feature>
<feature type="domain" description="S1 motif" evidence="1">
    <location>
        <begin position="629"/>
        <end position="697"/>
    </location>
</feature>
<feature type="binding site" evidence="1">
    <location>
        <position position="493"/>
    </location>
    <ligand>
        <name>Mg(2+)</name>
        <dbReference type="ChEBI" id="CHEBI:18420"/>
    </ligand>
</feature>
<feature type="binding site" evidence="1">
    <location>
        <position position="499"/>
    </location>
    <ligand>
        <name>Mg(2+)</name>
        <dbReference type="ChEBI" id="CHEBI:18420"/>
    </ligand>
</feature>
<organism>
    <name type="scientific">Burkholderia mallei (strain SAVP1)</name>
    <dbReference type="NCBI Taxonomy" id="320388"/>
    <lineage>
        <taxon>Bacteria</taxon>
        <taxon>Pseudomonadati</taxon>
        <taxon>Pseudomonadota</taxon>
        <taxon>Betaproteobacteria</taxon>
        <taxon>Burkholderiales</taxon>
        <taxon>Burkholderiaceae</taxon>
        <taxon>Burkholderia</taxon>
        <taxon>pseudomallei group</taxon>
    </lineage>
</organism>
<proteinExistence type="inferred from homology"/>
<name>PNP_BURMS</name>
<comment type="function">
    <text evidence="1">Involved in mRNA degradation. Catalyzes the phosphorolysis of single-stranded polyribonucleotides processively in the 3'- to 5'-direction.</text>
</comment>
<comment type="catalytic activity">
    <reaction evidence="1">
        <text>RNA(n+1) + phosphate = RNA(n) + a ribonucleoside 5'-diphosphate</text>
        <dbReference type="Rhea" id="RHEA:22096"/>
        <dbReference type="Rhea" id="RHEA-COMP:14527"/>
        <dbReference type="Rhea" id="RHEA-COMP:17342"/>
        <dbReference type="ChEBI" id="CHEBI:43474"/>
        <dbReference type="ChEBI" id="CHEBI:57930"/>
        <dbReference type="ChEBI" id="CHEBI:140395"/>
        <dbReference type="EC" id="2.7.7.8"/>
    </reaction>
</comment>
<comment type="cofactor">
    <cofactor evidence="1">
        <name>Mg(2+)</name>
        <dbReference type="ChEBI" id="CHEBI:18420"/>
    </cofactor>
</comment>
<comment type="subcellular location">
    <subcellularLocation>
        <location evidence="1">Cytoplasm</location>
    </subcellularLocation>
</comment>
<comment type="similarity">
    <text evidence="1">Belongs to the polyribonucleotide nucleotidyltransferase family.</text>
</comment>
<accession>A1V2L2</accession>